<sequence>MTSPVAVIARFMPRPDARSALRALLDAMITPTRAEDGCRSYDLYESADGGELVLFERYRSRIALDEHRGSPHYLNYRAQVGELLTRPVAVTVLAPLDEASA</sequence>
<dbReference type="EC" id="1.-.-.-"/>
<dbReference type="EMBL" id="AL123456">
    <property type="protein sequence ID" value="CCP43541.1"/>
    <property type="molecule type" value="Genomic_DNA"/>
</dbReference>
<dbReference type="PIR" id="D70710">
    <property type="entry name" value="D70710"/>
</dbReference>
<dbReference type="RefSeq" id="NP_215308.1">
    <property type="nucleotide sequence ID" value="NC_000962.3"/>
</dbReference>
<dbReference type="RefSeq" id="WP_003404010.1">
    <property type="nucleotide sequence ID" value="NZ_NVQJ01000035.1"/>
</dbReference>
<dbReference type="PDB" id="1Y0H">
    <property type="method" value="X-ray"/>
    <property type="resolution" value="1.60 A"/>
    <property type="chains" value="A/B=1-101"/>
</dbReference>
<dbReference type="PDBsum" id="1Y0H"/>
<dbReference type="SMR" id="O86332"/>
<dbReference type="STRING" id="83332.Rv0793"/>
<dbReference type="PaxDb" id="83332-Rv0793"/>
<dbReference type="DNASU" id="885497"/>
<dbReference type="GeneID" id="885497"/>
<dbReference type="KEGG" id="mtu:Rv0793"/>
<dbReference type="KEGG" id="mtv:RVBD_0793"/>
<dbReference type="TubercuList" id="Rv0793"/>
<dbReference type="eggNOG" id="COG1359">
    <property type="taxonomic scope" value="Bacteria"/>
</dbReference>
<dbReference type="InParanoid" id="O86332"/>
<dbReference type="OrthoDB" id="5244470at2"/>
<dbReference type="PhylomeDB" id="O86332"/>
<dbReference type="EvolutionaryTrace" id="O86332"/>
<dbReference type="Proteomes" id="UP000001584">
    <property type="component" value="Chromosome"/>
</dbReference>
<dbReference type="GO" id="GO:0003824">
    <property type="term" value="F:catalytic activity"/>
    <property type="evidence" value="ECO:0000318"/>
    <property type="project" value="GO_Central"/>
</dbReference>
<dbReference type="GO" id="GO:0004497">
    <property type="term" value="F:monooxygenase activity"/>
    <property type="evidence" value="ECO:0007669"/>
    <property type="project" value="UniProtKB-KW"/>
</dbReference>
<dbReference type="Gene3D" id="3.30.70.100">
    <property type="match status" value="1"/>
</dbReference>
<dbReference type="InterPro" id="IPR007138">
    <property type="entry name" value="ABM_dom"/>
</dbReference>
<dbReference type="InterPro" id="IPR050744">
    <property type="entry name" value="AI-2_Isomerase_LsrG"/>
</dbReference>
<dbReference type="InterPro" id="IPR011008">
    <property type="entry name" value="Dimeric_a/b-barrel"/>
</dbReference>
<dbReference type="PANTHER" id="PTHR33336:SF3">
    <property type="entry name" value="ABM DOMAIN-CONTAINING PROTEIN"/>
    <property type="match status" value="1"/>
</dbReference>
<dbReference type="PANTHER" id="PTHR33336">
    <property type="entry name" value="QUINOL MONOOXYGENASE YGIN-RELATED"/>
    <property type="match status" value="1"/>
</dbReference>
<dbReference type="Pfam" id="PF03992">
    <property type="entry name" value="ABM"/>
    <property type="match status" value="1"/>
</dbReference>
<dbReference type="SUPFAM" id="SSF54909">
    <property type="entry name" value="Dimeric alpha+beta barrel"/>
    <property type="match status" value="1"/>
</dbReference>
<dbReference type="PROSITE" id="PS51725">
    <property type="entry name" value="ABM"/>
    <property type="match status" value="1"/>
</dbReference>
<proteinExistence type="evidence at protein level"/>
<comment type="function">
    <text>Putative monooygenase that might be involved in antibiotic biosynthesis, or may act as reactive oxygen species scavenger that could help in evading host defenses.</text>
</comment>
<comment type="subunit">
    <text evidence="1">Homodimer.</text>
</comment>
<name>Y0793_MYCTU</name>
<keyword id="KW-0002">3D-structure</keyword>
<keyword id="KW-0503">Monooxygenase</keyword>
<keyword id="KW-0560">Oxidoreductase</keyword>
<keyword id="KW-1185">Reference proteome</keyword>
<feature type="chain" id="PRO_0000420880" description="Putative monooxygenase Rv0793">
    <location>
        <begin position="1"/>
        <end position="101"/>
    </location>
</feature>
<feature type="domain" description="ABM">
    <location>
        <begin position="5"/>
        <end position="93"/>
    </location>
</feature>
<feature type="strand" evidence="2">
    <location>
        <begin position="5"/>
        <end position="11"/>
    </location>
</feature>
<feature type="helix" evidence="2">
    <location>
        <begin position="15"/>
        <end position="17"/>
    </location>
</feature>
<feature type="helix" evidence="2">
    <location>
        <begin position="18"/>
        <end position="26"/>
    </location>
</feature>
<feature type="helix" evidence="2">
    <location>
        <begin position="29"/>
        <end position="34"/>
    </location>
</feature>
<feature type="strand" evidence="2">
    <location>
        <begin position="38"/>
        <end position="46"/>
    </location>
</feature>
<feature type="strand" evidence="2">
    <location>
        <begin position="52"/>
        <end position="60"/>
    </location>
</feature>
<feature type="helix" evidence="2">
    <location>
        <begin position="61"/>
        <end position="68"/>
    </location>
</feature>
<feature type="helix" evidence="2">
    <location>
        <begin position="71"/>
        <end position="77"/>
    </location>
</feature>
<feature type="helix" evidence="2">
    <location>
        <begin position="81"/>
        <end position="83"/>
    </location>
</feature>
<feature type="strand" evidence="2">
    <location>
        <begin position="84"/>
        <end position="86"/>
    </location>
</feature>
<feature type="strand" evidence="2">
    <location>
        <begin position="89"/>
        <end position="97"/>
    </location>
</feature>
<organism>
    <name type="scientific">Mycobacterium tuberculosis (strain ATCC 25618 / H37Rv)</name>
    <dbReference type="NCBI Taxonomy" id="83332"/>
    <lineage>
        <taxon>Bacteria</taxon>
        <taxon>Bacillati</taxon>
        <taxon>Actinomycetota</taxon>
        <taxon>Actinomycetes</taxon>
        <taxon>Mycobacteriales</taxon>
        <taxon>Mycobacteriaceae</taxon>
        <taxon>Mycobacterium</taxon>
        <taxon>Mycobacterium tuberculosis complex</taxon>
    </lineage>
</organism>
<reference key="1">
    <citation type="journal article" date="1998" name="Nature">
        <title>Deciphering the biology of Mycobacterium tuberculosis from the complete genome sequence.</title>
        <authorList>
            <person name="Cole S.T."/>
            <person name="Brosch R."/>
            <person name="Parkhill J."/>
            <person name="Garnier T."/>
            <person name="Churcher C.M."/>
            <person name="Harris D.E."/>
            <person name="Gordon S.V."/>
            <person name="Eiglmeier K."/>
            <person name="Gas S."/>
            <person name="Barry C.E. III"/>
            <person name="Tekaia F."/>
            <person name="Badcock K."/>
            <person name="Basham D."/>
            <person name="Brown D."/>
            <person name="Chillingworth T."/>
            <person name="Connor R."/>
            <person name="Davies R.M."/>
            <person name="Devlin K."/>
            <person name="Feltwell T."/>
            <person name="Gentles S."/>
            <person name="Hamlin N."/>
            <person name="Holroyd S."/>
            <person name="Hornsby T."/>
            <person name="Jagels K."/>
            <person name="Krogh A."/>
            <person name="McLean J."/>
            <person name="Moule S."/>
            <person name="Murphy L.D."/>
            <person name="Oliver S."/>
            <person name="Osborne J."/>
            <person name="Quail M.A."/>
            <person name="Rajandream M.A."/>
            <person name="Rogers J."/>
            <person name="Rutter S."/>
            <person name="Seeger K."/>
            <person name="Skelton S."/>
            <person name="Squares S."/>
            <person name="Squares R."/>
            <person name="Sulston J.E."/>
            <person name="Taylor K."/>
            <person name="Whitehead S."/>
            <person name="Barrell B.G."/>
        </authorList>
    </citation>
    <scope>NUCLEOTIDE SEQUENCE [LARGE SCALE GENOMIC DNA]</scope>
    <source>
        <strain>ATCC 25618 / H37Rv</strain>
    </source>
</reference>
<reference key="2">
    <citation type="journal article" date="2005" name="J. Struct. Funct. Genomics">
        <title>The crystal structure of Rv0793, a hypothetical monooxygenase from M. tuberculosis.</title>
        <authorList>
            <person name="Lemieux M.J."/>
            <person name="Ference C."/>
            <person name="Cherney M.M."/>
            <person name="Wang M."/>
            <person name="Garen C."/>
            <person name="James M.N."/>
        </authorList>
    </citation>
    <scope>X-RAY CRYSTALLOGRAPHY (1.60 ANGSTROMS)</scope>
    <scope>PUTATIVE FUNCTION</scope>
    <scope>SUBUNIT</scope>
    <source>
        <strain>ATCC 25618 / H37Rv</strain>
    </source>
</reference>
<evidence type="ECO:0000269" key="1">
    <source>
    </source>
</evidence>
<evidence type="ECO:0007829" key="2">
    <source>
        <dbReference type="PDB" id="1Y0H"/>
    </source>
</evidence>
<protein>
    <recommendedName>
        <fullName>Putative monooxygenase Rv0793</fullName>
        <ecNumber>1.-.-.-</ecNumber>
    </recommendedName>
</protein>
<accession>O86332</accession>
<accession>F2GNQ9</accession>
<accession>L0T4X2</accession>
<gene>
    <name type="ordered locus">Rv0793</name>
</gene>